<protein>
    <recommendedName>
        <fullName>FK506-binding protein 5</fullName>
        <ecNumber>5.2.1.8</ecNumber>
    </recommendedName>
    <alternativeName>
        <fullName>Peptidyl-prolyl cis-trans isomerase</fullName>
        <shortName>PPIase</shortName>
    </alternativeName>
    <alternativeName>
        <fullName>Rotamase</fullName>
    </alternativeName>
</protein>
<proteinExistence type="inferred from homology"/>
<dbReference type="EC" id="5.2.1.8"/>
<dbReference type="EMBL" id="CH476740">
    <property type="protein sequence ID" value="EIE86713.1"/>
    <property type="molecule type" value="Genomic_DNA"/>
</dbReference>
<dbReference type="SMR" id="P0C1J7"/>
<dbReference type="STRING" id="246409.P0C1J7"/>
<dbReference type="VEuPathDB" id="FungiDB:RO3G_11424"/>
<dbReference type="eggNOG" id="KOG0543">
    <property type="taxonomic scope" value="Eukaryota"/>
</dbReference>
<dbReference type="InParanoid" id="P0C1J7"/>
<dbReference type="OMA" id="LWNCEPE"/>
<dbReference type="OrthoDB" id="45975at4827"/>
<dbReference type="Proteomes" id="UP000009138">
    <property type="component" value="Unassembled WGS sequence"/>
</dbReference>
<dbReference type="GO" id="GO:0003755">
    <property type="term" value="F:peptidyl-prolyl cis-trans isomerase activity"/>
    <property type="evidence" value="ECO:0007669"/>
    <property type="project" value="UniProtKB-KW"/>
</dbReference>
<dbReference type="Gene3D" id="3.10.50.40">
    <property type="match status" value="1"/>
</dbReference>
<dbReference type="Gene3D" id="1.25.40.10">
    <property type="entry name" value="Tetratricopeptide repeat domain"/>
    <property type="match status" value="1"/>
</dbReference>
<dbReference type="InterPro" id="IPR050754">
    <property type="entry name" value="FKBP4/5/8-like"/>
</dbReference>
<dbReference type="InterPro" id="IPR046357">
    <property type="entry name" value="PPIase_dom_sf"/>
</dbReference>
<dbReference type="InterPro" id="IPR001179">
    <property type="entry name" value="PPIase_FKBP_dom"/>
</dbReference>
<dbReference type="InterPro" id="IPR011990">
    <property type="entry name" value="TPR-like_helical_dom_sf"/>
</dbReference>
<dbReference type="InterPro" id="IPR019734">
    <property type="entry name" value="TPR_rpt"/>
</dbReference>
<dbReference type="PANTHER" id="PTHR46512">
    <property type="entry name" value="PEPTIDYLPROLYL ISOMERASE"/>
    <property type="match status" value="1"/>
</dbReference>
<dbReference type="PANTHER" id="PTHR46512:SF9">
    <property type="entry name" value="PEPTIDYLPROLYL ISOMERASE"/>
    <property type="match status" value="1"/>
</dbReference>
<dbReference type="Pfam" id="PF00254">
    <property type="entry name" value="FKBP_C"/>
    <property type="match status" value="1"/>
</dbReference>
<dbReference type="Pfam" id="PF13181">
    <property type="entry name" value="TPR_8"/>
    <property type="match status" value="2"/>
</dbReference>
<dbReference type="SMART" id="SM00028">
    <property type="entry name" value="TPR"/>
    <property type="match status" value="3"/>
</dbReference>
<dbReference type="SUPFAM" id="SSF54534">
    <property type="entry name" value="FKBP-like"/>
    <property type="match status" value="1"/>
</dbReference>
<dbReference type="SUPFAM" id="SSF48452">
    <property type="entry name" value="TPR-like"/>
    <property type="match status" value="1"/>
</dbReference>
<dbReference type="PROSITE" id="PS50059">
    <property type="entry name" value="FKBP_PPIASE"/>
    <property type="match status" value="1"/>
</dbReference>
<dbReference type="PROSITE" id="PS50005">
    <property type="entry name" value="TPR"/>
    <property type="match status" value="2"/>
</dbReference>
<dbReference type="PROSITE" id="PS50293">
    <property type="entry name" value="TPR_REGION"/>
    <property type="match status" value="1"/>
</dbReference>
<reference key="1">
    <citation type="journal article" date="2009" name="PLoS Genet.">
        <title>Genomic analysis of the basal lineage fungus Rhizopus oryzae reveals a whole-genome duplication.</title>
        <authorList>
            <person name="Ma L.-J."/>
            <person name="Ibrahim A.S."/>
            <person name="Skory C."/>
            <person name="Grabherr M.G."/>
            <person name="Burger G."/>
            <person name="Butler M."/>
            <person name="Elias M."/>
            <person name="Idnurm A."/>
            <person name="Lang B.F."/>
            <person name="Sone T."/>
            <person name="Abe A."/>
            <person name="Calvo S.E."/>
            <person name="Corrochano L.M."/>
            <person name="Engels R."/>
            <person name="Fu J."/>
            <person name="Hansberg W."/>
            <person name="Kim J.-M."/>
            <person name="Kodira C.D."/>
            <person name="Koehrsen M.J."/>
            <person name="Liu B."/>
            <person name="Miranda-Saavedra D."/>
            <person name="O'Leary S."/>
            <person name="Ortiz-Castellanos L."/>
            <person name="Poulter R."/>
            <person name="Rodriguez-Romero J."/>
            <person name="Ruiz-Herrera J."/>
            <person name="Shen Y.-Q."/>
            <person name="Zeng Q."/>
            <person name="Galagan J."/>
            <person name="Birren B.W."/>
            <person name="Cuomo C.A."/>
            <person name="Wickes B.L."/>
        </authorList>
    </citation>
    <scope>NUCLEOTIDE SEQUENCE [LARGE SCALE GENOMIC DNA]</scope>
    <source>
        <strain>RA 99-880 / ATCC MYA-4621 / FGSC 9543 / NRRL 43880</strain>
    </source>
</reference>
<gene>
    <name type="primary">FKBP5</name>
    <name type="synonym">fpr5</name>
    <name type="ORF">RO3G_11424</name>
</gene>
<sequence>MEQLTPDGGVTKRIIKAGLGQRPEPTNFVSVHYDAYLLDTSEKFDSSRDRNTEFTFQLRDSKVIEAWELAIPTMQVGELAEIICTSDYGYGDQGRQYIVPPRAQLRFEVELIGFWEKPKSASERIRLAEKKKNEGNALFKLDAIESALFAYRKGREYIQDLWDCEPEELEEARQLIVSIQLNIGACHLKLKHYDHAIEVCQKALDRDMTKIKAYYRIGQAYMEKGDYESSLTFIRIGLETAIGLLAQSIDLIENTLTDNEQFIHESKVMPSSTIVTVLNYDKRDRNIPAENDRWAAKERIIKIQKTIEENSKISLDTPLVLSATIDASDSHQYQFQSSFGRELFYCSIHAIHHYASIKAICIELGLSVPSHFGLAPSTLQHIKKQ</sequence>
<organism>
    <name type="scientific">Rhizopus delemar (strain RA 99-880 / ATCC MYA-4621 / FGSC 9543 / NRRL 43880)</name>
    <name type="common">Mucormycosis agent</name>
    <name type="synonym">Rhizopus arrhizus var. delemar</name>
    <dbReference type="NCBI Taxonomy" id="246409"/>
    <lineage>
        <taxon>Eukaryota</taxon>
        <taxon>Fungi</taxon>
        <taxon>Fungi incertae sedis</taxon>
        <taxon>Mucoromycota</taxon>
        <taxon>Mucoromycotina</taxon>
        <taxon>Mucoromycetes</taxon>
        <taxon>Mucorales</taxon>
        <taxon>Mucorineae</taxon>
        <taxon>Rhizopodaceae</taxon>
        <taxon>Rhizopus</taxon>
    </lineage>
</organism>
<accession>P0C1J7</accession>
<accession>I1CE33</accession>
<keyword id="KW-0413">Isomerase</keyword>
<keyword id="KW-1185">Reference proteome</keyword>
<keyword id="KW-0677">Repeat</keyword>
<keyword id="KW-0697">Rotamase</keyword>
<keyword id="KW-0802">TPR repeat</keyword>
<comment type="function">
    <text evidence="1">PPIases accelerate the folding of proteins. It catalyzes the cis-trans isomerization of proline imidic peptide bonds in oligopeptides (By similarity).</text>
</comment>
<comment type="catalytic activity">
    <reaction>
        <text>[protein]-peptidylproline (omega=180) = [protein]-peptidylproline (omega=0)</text>
        <dbReference type="Rhea" id="RHEA:16237"/>
        <dbReference type="Rhea" id="RHEA-COMP:10747"/>
        <dbReference type="Rhea" id="RHEA-COMP:10748"/>
        <dbReference type="ChEBI" id="CHEBI:83833"/>
        <dbReference type="ChEBI" id="CHEBI:83834"/>
        <dbReference type="EC" id="5.2.1.8"/>
    </reaction>
</comment>
<comment type="activity regulation">
    <text evidence="1">Inhibited by both FK506 and rapamycin.</text>
</comment>
<feature type="chain" id="PRO_0000244730" description="FK506-binding protein 5">
    <location>
        <begin position="1"/>
        <end position="385"/>
    </location>
</feature>
<feature type="domain" description="PPIase FKBP-type" evidence="2">
    <location>
        <begin position="26"/>
        <end position="115"/>
    </location>
</feature>
<feature type="repeat" description="TPR 1">
    <location>
        <begin position="128"/>
        <end position="161"/>
    </location>
</feature>
<feature type="repeat" description="TPR 2">
    <location>
        <begin position="177"/>
        <end position="210"/>
    </location>
</feature>
<feature type="repeat" description="TPR 3">
    <location>
        <begin position="211"/>
        <end position="244"/>
    </location>
</feature>
<evidence type="ECO:0000250" key="1"/>
<evidence type="ECO:0000255" key="2">
    <source>
        <dbReference type="PROSITE-ProRule" id="PRU00277"/>
    </source>
</evidence>
<name>FKBP5_RHIO9</name>